<keyword id="KW-0349">Heme</keyword>
<keyword id="KW-0376">Hydrogen peroxide</keyword>
<keyword id="KW-0408">Iron</keyword>
<keyword id="KW-0479">Metal-binding</keyword>
<keyword id="KW-0560">Oxidoreductase</keyword>
<keyword id="KW-0575">Peroxidase</keyword>
<keyword id="KW-1185">Reference proteome</keyword>
<organism>
    <name type="scientific">Staphylococcus aureus (strain NCTC 8325 / PS 47)</name>
    <dbReference type="NCBI Taxonomy" id="93061"/>
    <lineage>
        <taxon>Bacteria</taxon>
        <taxon>Bacillati</taxon>
        <taxon>Bacillota</taxon>
        <taxon>Bacilli</taxon>
        <taxon>Bacillales</taxon>
        <taxon>Staphylococcaceae</taxon>
        <taxon>Staphylococcus</taxon>
    </lineage>
</organism>
<dbReference type="EC" id="1.11.1.6"/>
<dbReference type="EMBL" id="CP000253">
    <property type="protein sequence ID" value="ABD30425.1"/>
    <property type="status" value="ALT_INIT"/>
    <property type="molecule type" value="Genomic_DNA"/>
</dbReference>
<dbReference type="RefSeq" id="WP_000082539.1">
    <property type="nucleotide sequence ID" value="NZ_LS483365.1"/>
</dbReference>
<dbReference type="RefSeq" id="WP_010956564.1">
    <property type="nucleotide sequence ID" value="NC_007795.1"/>
</dbReference>
<dbReference type="RefSeq" id="YP_499857.1">
    <property type="nucleotide sequence ID" value="NC_007795.1"/>
</dbReference>
<dbReference type="SMR" id="Q2FYU7"/>
<dbReference type="STRING" id="93061.SAOUHSC_01327"/>
<dbReference type="PaxDb" id="1280-SAXN108_1351"/>
<dbReference type="GeneID" id="3920192"/>
<dbReference type="KEGG" id="sao:SAOUHSC_01327"/>
<dbReference type="PATRIC" id="fig|93061.5.peg.1213"/>
<dbReference type="eggNOG" id="COG0753">
    <property type="taxonomic scope" value="Bacteria"/>
</dbReference>
<dbReference type="HOGENOM" id="CLU_010645_2_0_9"/>
<dbReference type="OrthoDB" id="9760293at2"/>
<dbReference type="Proteomes" id="UP000008816">
    <property type="component" value="Chromosome"/>
</dbReference>
<dbReference type="GO" id="GO:0005737">
    <property type="term" value="C:cytoplasm"/>
    <property type="evidence" value="ECO:0000318"/>
    <property type="project" value="GO_Central"/>
</dbReference>
<dbReference type="GO" id="GO:0004096">
    <property type="term" value="F:catalase activity"/>
    <property type="evidence" value="ECO:0000318"/>
    <property type="project" value="GO_Central"/>
</dbReference>
<dbReference type="GO" id="GO:0020037">
    <property type="term" value="F:heme binding"/>
    <property type="evidence" value="ECO:0000318"/>
    <property type="project" value="GO_Central"/>
</dbReference>
<dbReference type="GO" id="GO:0046872">
    <property type="term" value="F:metal ion binding"/>
    <property type="evidence" value="ECO:0007669"/>
    <property type="project" value="UniProtKB-KW"/>
</dbReference>
<dbReference type="GO" id="GO:0042744">
    <property type="term" value="P:hydrogen peroxide catabolic process"/>
    <property type="evidence" value="ECO:0000318"/>
    <property type="project" value="GO_Central"/>
</dbReference>
<dbReference type="GO" id="GO:0042542">
    <property type="term" value="P:response to hydrogen peroxide"/>
    <property type="evidence" value="ECO:0000318"/>
    <property type="project" value="GO_Central"/>
</dbReference>
<dbReference type="CDD" id="cd08156">
    <property type="entry name" value="catalase_clade_3"/>
    <property type="match status" value="1"/>
</dbReference>
<dbReference type="FunFam" id="2.40.180.10:FF:000001">
    <property type="entry name" value="Catalase"/>
    <property type="match status" value="1"/>
</dbReference>
<dbReference type="Gene3D" id="2.40.180.10">
    <property type="entry name" value="Catalase core domain"/>
    <property type="match status" value="1"/>
</dbReference>
<dbReference type="InterPro" id="IPR018028">
    <property type="entry name" value="Catalase"/>
</dbReference>
<dbReference type="InterPro" id="IPR040333">
    <property type="entry name" value="Catalase_3"/>
</dbReference>
<dbReference type="InterPro" id="IPR024708">
    <property type="entry name" value="Catalase_AS"/>
</dbReference>
<dbReference type="InterPro" id="IPR024711">
    <property type="entry name" value="Catalase_clade1/3"/>
</dbReference>
<dbReference type="InterPro" id="IPR011614">
    <property type="entry name" value="Catalase_core"/>
</dbReference>
<dbReference type="InterPro" id="IPR002226">
    <property type="entry name" value="Catalase_haem_BS"/>
</dbReference>
<dbReference type="InterPro" id="IPR010582">
    <property type="entry name" value="Catalase_immune_responsive"/>
</dbReference>
<dbReference type="InterPro" id="IPR020835">
    <property type="entry name" value="Catalase_sf"/>
</dbReference>
<dbReference type="PANTHER" id="PTHR11465">
    <property type="entry name" value="CATALASE"/>
    <property type="match status" value="1"/>
</dbReference>
<dbReference type="PANTHER" id="PTHR11465:SF61">
    <property type="entry name" value="CATALASE"/>
    <property type="match status" value="1"/>
</dbReference>
<dbReference type="Pfam" id="PF00199">
    <property type="entry name" value="Catalase"/>
    <property type="match status" value="1"/>
</dbReference>
<dbReference type="Pfam" id="PF06628">
    <property type="entry name" value="Catalase-rel"/>
    <property type="match status" value="1"/>
</dbReference>
<dbReference type="PIRSF" id="PIRSF038928">
    <property type="entry name" value="Catalase_clade1-3"/>
    <property type="match status" value="1"/>
</dbReference>
<dbReference type="PRINTS" id="PR00067">
    <property type="entry name" value="CATALASE"/>
</dbReference>
<dbReference type="SMART" id="SM01060">
    <property type="entry name" value="Catalase"/>
    <property type="match status" value="1"/>
</dbReference>
<dbReference type="SUPFAM" id="SSF56634">
    <property type="entry name" value="Heme-dependent catalase-like"/>
    <property type="match status" value="1"/>
</dbReference>
<dbReference type="PROSITE" id="PS00437">
    <property type="entry name" value="CATALASE_1"/>
    <property type="match status" value="1"/>
</dbReference>
<dbReference type="PROSITE" id="PS00438">
    <property type="entry name" value="CATALASE_2"/>
    <property type="match status" value="1"/>
</dbReference>
<dbReference type="PROSITE" id="PS51402">
    <property type="entry name" value="CATALASE_3"/>
    <property type="match status" value="1"/>
</dbReference>
<comment type="function">
    <text evidence="4 6">Decomposes hydrogen peroxide into water and oxygen; serves to protect cells from the toxic effects of hydrogen peroxide. Involved in resistance to paraquat when fur is absent and to tert-butyl hydroperoxide. Is important for survival under glucose starvation and desiccation conditions. Not required for virulence although is necessary for nasal colonization.</text>
</comment>
<comment type="catalytic activity">
    <reaction evidence="2">
        <text>2 H2O2 = O2 + 2 H2O</text>
        <dbReference type="Rhea" id="RHEA:20309"/>
        <dbReference type="ChEBI" id="CHEBI:15377"/>
        <dbReference type="ChEBI" id="CHEBI:15379"/>
        <dbReference type="ChEBI" id="CHEBI:16240"/>
        <dbReference type="EC" id="1.11.1.6"/>
    </reaction>
</comment>
<comment type="cofactor">
    <cofactor evidence="1">
        <name>heme</name>
        <dbReference type="ChEBI" id="CHEBI:30413"/>
    </cofactor>
</comment>
<comment type="subunit">
    <text evidence="1">Homodimer.</text>
</comment>
<comment type="induction">
    <text evidence="5 6">Induced by hypochlorous acid. Positively regulated by the ferric uptake regulator (fur), in a Fe(2+) dependent manner. Negatively regulated by PerR.</text>
</comment>
<comment type="similarity">
    <text evidence="7">Belongs to the catalase family.</text>
</comment>
<comment type="sequence caution" evidence="7">
    <conflict type="erroneous initiation">
        <sequence resource="EMBL-CDS" id="ABD30425"/>
    </conflict>
</comment>
<protein>
    <recommendedName>
        <fullName>Catalase</fullName>
        <ecNumber>1.11.1.6</ecNumber>
    </recommendedName>
</protein>
<proteinExistence type="evidence at transcript level"/>
<sequence length="505" mass="58380">MSQQDKKLTGVFGHPVSDRENSMTAGPRGPLLMQDIYFLEQMSQFDREVIPERRMHAKGSGAFGTFTVTKDITKYTNAKIFSEIGKQTEMFARFSTVAGERGAADAERDIRGFALKFYTEEGNWDLVGNNTPVFFFRDPKLFVSLNRAVKRDPRTNMRDAQNNWDFWTGLPEALHQVTILMSDRGIPKDLRHMHGFGSHTYSMYNDSGERVWVKFHFRTQQGIENLTDEEAAEIIATDRDSSQRDLFEAIEKGDYPKWTMYIQVMTEEQAKNHKDNPFDLTKVWYHDEYPLIEVGEFELNRNPDNYFMDVEQAAFAPTNIIPGLDFSPDKMLQGRLFSYGDAQRYRLGVNHWQIPVNQPKGVGIENICPFSRDGQMRVVDNNQGGGTHYYPNNHGKFDSQPEYKKPPFPTDGYGYEYNQRQDDDNYFEQPGKLFRLQSEDAKERIFTNTANAMEGVTDDVKRRHIRHCYKADPEYGKGVAKALGIDINSIDLETENDETYENFEK</sequence>
<gene>
    <name type="primary">katA</name>
    <name type="ordered locus">SAOUHSC_01327</name>
</gene>
<evidence type="ECO:0000250" key="1"/>
<evidence type="ECO:0000255" key="2">
    <source>
        <dbReference type="PROSITE-ProRule" id="PRU10013"/>
    </source>
</evidence>
<evidence type="ECO:0000256" key="3">
    <source>
        <dbReference type="SAM" id="MobiDB-lite"/>
    </source>
</evidence>
<evidence type="ECO:0000269" key="4">
    <source>
    </source>
</evidence>
<evidence type="ECO:0000269" key="5">
    <source>
    </source>
</evidence>
<evidence type="ECO:0000269" key="6">
    <source>
    </source>
</evidence>
<evidence type="ECO:0000305" key="7"/>
<reference key="1">
    <citation type="book" date="2006" name="Gram positive pathogens, 2nd edition">
        <title>The Staphylococcus aureus NCTC 8325 genome.</title>
        <editorList>
            <person name="Fischetti V."/>
            <person name="Novick R."/>
            <person name="Ferretti J."/>
            <person name="Portnoy D."/>
            <person name="Rood J."/>
        </editorList>
        <authorList>
            <person name="Gillaspy A.F."/>
            <person name="Worrell V."/>
            <person name="Orvis J."/>
            <person name="Roe B.A."/>
            <person name="Dyer D.W."/>
            <person name="Iandolo J.J."/>
        </authorList>
    </citation>
    <scope>NUCLEOTIDE SEQUENCE [LARGE SCALE GENOMIC DNA]</scope>
    <source>
        <strain>NCTC 8325 / PS 47</strain>
    </source>
</reference>
<reference key="2">
    <citation type="journal article" date="2001" name="Infect. Immun.">
        <title>PerR controls oxidative stress resistance and iron storage proteins and is required for virulence in Staphylococcus aureus.</title>
        <authorList>
            <person name="Horsburgh M.J."/>
            <person name="Clements M.O."/>
            <person name="Crossley H."/>
            <person name="Ingham E."/>
            <person name="Foster S.J."/>
        </authorList>
    </citation>
    <scope>FUNCTION</scope>
    <scope>REGULATION BY PERR</scope>
</reference>
<reference key="3">
    <citation type="journal article" date="2006" name="Microbiology">
        <title>The impairment of superoxide dismutase coordinates the derepression of the perR regulon in the response of Staphylococcus aureus to HOCl stress.</title>
        <authorList>
            <person name="Maalej S."/>
            <person name="Dammak I."/>
            <person name="Dukan S."/>
        </authorList>
    </citation>
    <scope>INDUCTION BY HYPOCHLOROUS ACID</scope>
</reference>
<reference key="4">
    <citation type="journal article" date="2007" name="J. Bacteriol.">
        <title>Catalase (katA) and alkyl hydroperoxide reductase (ahpC) have compensatory roles in peroxide stress resistance and are required for survival, persistence and nasal colonization in Staphylococcus aureus.</title>
        <authorList>
            <person name="Cosgrove K."/>
            <person name="Coutts G."/>
            <person name="Jonsson I.-M."/>
            <person name="Tarkowski A."/>
            <person name="Kokai-Kun J.F."/>
            <person name="Mond J.J."/>
            <person name="Foster S.J."/>
        </authorList>
    </citation>
    <scope>FUNCTION</scope>
    <scope>INDUCTION BY FUR</scope>
</reference>
<feature type="chain" id="PRO_0000278273" description="Catalase">
    <location>
        <begin position="1"/>
        <end position="505"/>
    </location>
</feature>
<feature type="region of interest" description="Disordered" evidence="3">
    <location>
        <begin position="1"/>
        <end position="25"/>
    </location>
</feature>
<feature type="active site" evidence="2">
    <location>
        <position position="56"/>
    </location>
</feature>
<feature type="active site" evidence="2">
    <location>
        <position position="129"/>
    </location>
</feature>
<feature type="binding site" description="axial binding residue" evidence="1">
    <location>
        <position position="339"/>
    </location>
    <ligand>
        <name>heme</name>
        <dbReference type="ChEBI" id="CHEBI:30413"/>
    </ligand>
    <ligandPart>
        <name>Fe</name>
        <dbReference type="ChEBI" id="CHEBI:18248"/>
    </ligandPart>
</feature>
<accession>Q2FYU7</accession>
<name>CATA_STAA8</name>